<accession>Q79AV1</accession>
<accession>Q31R31</accession>
<feature type="propeptide" id="PRO_0000029547" evidence="1">
    <location>
        <begin position="1"/>
        <end position="8"/>
    </location>
</feature>
<feature type="chain" id="PRO_0000029548" description="Photosystem II reaction center protein K" evidence="1">
    <location>
        <begin position="9"/>
        <end position="45"/>
    </location>
</feature>
<feature type="transmembrane region" description="Helical" evidence="1">
    <location>
        <begin position="24"/>
        <end position="44"/>
    </location>
</feature>
<organism>
    <name type="scientific">Synechococcus elongatus (strain ATCC 33912 / PCC 7942 / FACHB-805)</name>
    <name type="common">Anacystis nidulans R2</name>
    <dbReference type="NCBI Taxonomy" id="1140"/>
    <lineage>
        <taxon>Bacteria</taxon>
        <taxon>Bacillati</taxon>
        <taxon>Cyanobacteriota</taxon>
        <taxon>Cyanophyceae</taxon>
        <taxon>Synechococcales</taxon>
        <taxon>Synechococcaceae</taxon>
        <taxon>Synechococcus</taxon>
    </lineage>
</organism>
<sequence>MEAALLLAKLPEAYQIFDPLVDVLPVIPVFFLLLAFVWQAAVGFR</sequence>
<reference key="1">
    <citation type="submission" date="2002-07" db="EMBL/GenBank/DDBJ databases">
        <title>Synechococcus elongatus PCC 7942 cosmid 3E9.</title>
        <authorList>
            <person name="Holtman C.K."/>
            <person name="Sandoval P."/>
            <person name="Chen Y."/>
            <person name="Socias T."/>
            <person name="Mohler B.J."/>
            <person name="McMurtry S."/>
            <person name="Gonzalez A."/>
            <person name="Salinas I."/>
            <person name="Golden S.S."/>
            <person name="Youderian P."/>
        </authorList>
    </citation>
    <scope>NUCLEOTIDE SEQUENCE [GENOMIC DNA]</scope>
</reference>
<reference key="2">
    <citation type="submission" date="2005-08" db="EMBL/GenBank/DDBJ databases">
        <title>Complete sequence of chromosome 1 of Synechococcus elongatus PCC 7942.</title>
        <authorList>
            <consortium name="US DOE Joint Genome Institute"/>
            <person name="Copeland A."/>
            <person name="Lucas S."/>
            <person name="Lapidus A."/>
            <person name="Barry K."/>
            <person name="Detter J.C."/>
            <person name="Glavina T."/>
            <person name="Hammon N."/>
            <person name="Israni S."/>
            <person name="Pitluck S."/>
            <person name="Schmutz J."/>
            <person name="Larimer F."/>
            <person name="Land M."/>
            <person name="Kyrpides N."/>
            <person name="Lykidis A."/>
            <person name="Golden S."/>
            <person name="Richardson P."/>
        </authorList>
    </citation>
    <scope>NUCLEOTIDE SEQUENCE [LARGE SCALE GENOMIC DNA]</scope>
    <source>
        <strain>ATCC 33912 / PCC 7942 / FACHB-805</strain>
    </source>
</reference>
<proteinExistence type="inferred from homology"/>
<evidence type="ECO:0000255" key="1">
    <source>
        <dbReference type="HAMAP-Rule" id="MF_00441"/>
    </source>
</evidence>
<comment type="function">
    <text evidence="1">One of the components of the core complex of photosystem II (PSII). PSII is a light-driven water:plastoquinone oxidoreductase that uses light energy to abstract electrons from H(2)O, generating O(2) and a proton gradient subsequently used for ATP formation. It consists of a core antenna complex that captures photons, and an electron transfer chain that converts photonic excitation into a charge separation.</text>
</comment>
<comment type="subunit">
    <text evidence="1">PSII is composed of 1 copy each of membrane proteins PsbA, PsbB, PsbC, PsbD, PsbE, PsbF, PsbH, PsbI, PsbJ, PsbK, PsbL, PsbM, PsbT, PsbX, PsbY, PsbZ, Psb30/Ycf12, peripheral proteins PsbO, CyanoQ (PsbQ), PsbU, PsbV and a large number of cofactors. It forms dimeric complexes.</text>
</comment>
<comment type="subcellular location">
    <subcellularLocation>
        <location evidence="1">Cellular thylakoid membrane</location>
        <topology evidence="1">Single-pass membrane protein</topology>
    </subcellularLocation>
</comment>
<comment type="similarity">
    <text evidence="1">Belongs to the PsbK family.</text>
</comment>
<name>PSBK_SYNE7</name>
<gene>
    <name evidence="1" type="primary">psbK</name>
    <name type="ordered locus">Synpcc7942_0456</name>
    <name type="ORF">sel0014</name>
</gene>
<keyword id="KW-0472">Membrane</keyword>
<keyword id="KW-0602">Photosynthesis</keyword>
<keyword id="KW-0604">Photosystem II</keyword>
<keyword id="KW-0674">Reaction center</keyword>
<keyword id="KW-1185">Reference proteome</keyword>
<keyword id="KW-0793">Thylakoid</keyword>
<keyword id="KW-0812">Transmembrane</keyword>
<keyword id="KW-1133">Transmembrane helix</keyword>
<dbReference type="EMBL" id="X04616">
    <property type="protein sequence ID" value="CAD55620.1"/>
    <property type="molecule type" value="Genomic_DNA"/>
</dbReference>
<dbReference type="EMBL" id="CP000100">
    <property type="protein sequence ID" value="ABB56488.1"/>
    <property type="molecule type" value="Genomic_DNA"/>
</dbReference>
<dbReference type="RefSeq" id="WP_006195022.1">
    <property type="nucleotide sequence ID" value="NZ_JACJTX010000002.1"/>
</dbReference>
<dbReference type="SMR" id="Q79AV1"/>
<dbReference type="STRING" id="1140.Synpcc7942_0456"/>
<dbReference type="TCDB" id="3.E.2.2.1">
    <property type="family name" value="the photosynthetic reaction center (prc) family"/>
</dbReference>
<dbReference type="PaxDb" id="1140-Synpcc7942_0456"/>
<dbReference type="KEGG" id="syf:Synpcc7942_0456"/>
<dbReference type="eggNOG" id="ENOG5032YQR">
    <property type="taxonomic scope" value="Bacteria"/>
</dbReference>
<dbReference type="HOGENOM" id="CLU_174355_0_0_3"/>
<dbReference type="BioCyc" id="MetaCyc:SYNPCC7942_0456-MONOMER"/>
<dbReference type="BioCyc" id="SYNEL:SYNPCC7942_0456-MONOMER"/>
<dbReference type="Proteomes" id="UP000889800">
    <property type="component" value="Chromosome"/>
</dbReference>
<dbReference type="GO" id="GO:0009539">
    <property type="term" value="C:photosystem II reaction center"/>
    <property type="evidence" value="ECO:0007669"/>
    <property type="project" value="InterPro"/>
</dbReference>
<dbReference type="GO" id="GO:0031676">
    <property type="term" value="C:plasma membrane-derived thylakoid membrane"/>
    <property type="evidence" value="ECO:0007669"/>
    <property type="project" value="UniProtKB-SubCell"/>
</dbReference>
<dbReference type="GO" id="GO:0015979">
    <property type="term" value="P:photosynthesis"/>
    <property type="evidence" value="ECO:0007669"/>
    <property type="project" value="UniProtKB-UniRule"/>
</dbReference>
<dbReference type="HAMAP" id="MF_00441">
    <property type="entry name" value="PSII_PsbK"/>
    <property type="match status" value="1"/>
</dbReference>
<dbReference type="InterPro" id="IPR003687">
    <property type="entry name" value="PSII_PsbK"/>
</dbReference>
<dbReference type="InterPro" id="IPR037270">
    <property type="entry name" value="PSII_PsbK_sf"/>
</dbReference>
<dbReference type="NCBIfam" id="NF002715">
    <property type="entry name" value="PRK02553.1"/>
    <property type="match status" value="1"/>
</dbReference>
<dbReference type="PANTHER" id="PTHR35325">
    <property type="match status" value="1"/>
</dbReference>
<dbReference type="PANTHER" id="PTHR35325:SF1">
    <property type="entry name" value="PHOTOSYSTEM II REACTION CENTER PROTEIN K"/>
    <property type="match status" value="1"/>
</dbReference>
<dbReference type="Pfam" id="PF02533">
    <property type="entry name" value="PsbK"/>
    <property type="match status" value="1"/>
</dbReference>
<dbReference type="SUPFAM" id="SSF161037">
    <property type="entry name" value="Photosystem II reaction center protein K, PsbK"/>
    <property type="match status" value="1"/>
</dbReference>
<protein>
    <recommendedName>
        <fullName evidence="1">Photosystem II reaction center protein K</fullName>
        <shortName evidence="1">PSII-K</shortName>
    </recommendedName>
</protein>